<accession>A8GQL7</accession>
<organism>
    <name type="scientific">Rickettsia rickettsii (strain Sheila Smith)</name>
    <dbReference type="NCBI Taxonomy" id="392021"/>
    <lineage>
        <taxon>Bacteria</taxon>
        <taxon>Pseudomonadati</taxon>
        <taxon>Pseudomonadota</taxon>
        <taxon>Alphaproteobacteria</taxon>
        <taxon>Rickettsiales</taxon>
        <taxon>Rickettsiaceae</taxon>
        <taxon>Rickettsieae</taxon>
        <taxon>Rickettsia</taxon>
        <taxon>spotted fever group</taxon>
    </lineage>
</organism>
<dbReference type="EMBL" id="CP000848">
    <property type="protein sequence ID" value="ABV75692.1"/>
    <property type="molecule type" value="Genomic_DNA"/>
</dbReference>
<dbReference type="RefSeq" id="WP_012150311.1">
    <property type="nucleotide sequence ID" value="NZ_CP121767.1"/>
</dbReference>
<dbReference type="SMR" id="A8GQL7"/>
<dbReference type="GeneID" id="79936885"/>
<dbReference type="KEGG" id="rri:A1G_00530"/>
<dbReference type="HOGENOM" id="CLU_007831_2_2_5"/>
<dbReference type="Proteomes" id="UP000006832">
    <property type="component" value="Chromosome"/>
</dbReference>
<dbReference type="GO" id="GO:0005829">
    <property type="term" value="C:cytosol"/>
    <property type="evidence" value="ECO:0007669"/>
    <property type="project" value="TreeGrafter"/>
</dbReference>
<dbReference type="GO" id="GO:0050660">
    <property type="term" value="F:flavin adenine dinucleotide binding"/>
    <property type="evidence" value="ECO:0007669"/>
    <property type="project" value="UniProtKB-UniRule"/>
</dbReference>
<dbReference type="GO" id="GO:0030488">
    <property type="term" value="P:tRNA methylation"/>
    <property type="evidence" value="ECO:0007669"/>
    <property type="project" value="TreeGrafter"/>
</dbReference>
<dbReference type="GO" id="GO:0002098">
    <property type="term" value="P:tRNA wobble uridine modification"/>
    <property type="evidence" value="ECO:0007669"/>
    <property type="project" value="InterPro"/>
</dbReference>
<dbReference type="FunFam" id="3.50.50.60:FF:000082">
    <property type="entry name" value="protein MTO1 homolog, mitochondrial isoform X1"/>
    <property type="match status" value="1"/>
</dbReference>
<dbReference type="FunFam" id="1.10.150.570:FF:000001">
    <property type="entry name" value="tRNA uridine 5-carboxymethylaminomethyl modification enzyme MnmG"/>
    <property type="match status" value="1"/>
</dbReference>
<dbReference type="FunFam" id="3.50.50.60:FF:000002">
    <property type="entry name" value="tRNA uridine 5-carboxymethylaminomethyl modification enzyme MnmG"/>
    <property type="match status" value="1"/>
</dbReference>
<dbReference type="Gene3D" id="3.50.50.60">
    <property type="entry name" value="FAD/NAD(P)-binding domain"/>
    <property type="match status" value="2"/>
</dbReference>
<dbReference type="Gene3D" id="1.10.150.570">
    <property type="entry name" value="GidA associated domain, C-terminal subdomain"/>
    <property type="match status" value="1"/>
</dbReference>
<dbReference type="Gene3D" id="1.10.10.1800">
    <property type="entry name" value="tRNA uridine 5-carboxymethylaminomethyl modification enzyme MnmG/GidA"/>
    <property type="match status" value="1"/>
</dbReference>
<dbReference type="HAMAP" id="MF_00129">
    <property type="entry name" value="MnmG_GidA"/>
    <property type="match status" value="1"/>
</dbReference>
<dbReference type="InterPro" id="IPR036188">
    <property type="entry name" value="FAD/NAD-bd_sf"/>
</dbReference>
<dbReference type="InterPro" id="IPR049312">
    <property type="entry name" value="GIDA_C_N"/>
</dbReference>
<dbReference type="InterPro" id="IPR004416">
    <property type="entry name" value="MnmG"/>
</dbReference>
<dbReference type="InterPro" id="IPR002218">
    <property type="entry name" value="MnmG-rel"/>
</dbReference>
<dbReference type="InterPro" id="IPR020595">
    <property type="entry name" value="MnmG-rel_CS"/>
</dbReference>
<dbReference type="InterPro" id="IPR026904">
    <property type="entry name" value="MnmG_C"/>
</dbReference>
<dbReference type="InterPro" id="IPR047001">
    <property type="entry name" value="MnmG_C_subdom"/>
</dbReference>
<dbReference type="InterPro" id="IPR044920">
    <property type="entry name" value="MnmG_C_subdom_sf"/>
</dbReference>
<dbReference type="InterPro" id="IPR040131">
    <property type="entry name" value="MnmG_N"/>
</dbReference>
<dbReference type="NCBIfam" id="TIGR00136">
    <property type="entry name" value="mnmG_gidA"/>
    <property type="match status" value="1"/>
</dbReference>
<dbReference type="PANTHER" id="PTHR11806">
    <property type="entry name" value="GLUCOSE INHIBITED DIVISION PROTEIN A"/>
    <property type="match status" value="1"/>
</dbReference>
<dbReference type="PANTHER" id="PTHR11806:SF0">
    <property type="entry name" value="PROTEIN MTO1 HOMOLOG, MITOCHONDRIAL"/>
    <property type="match status" value="1"/>
</dbReference>
<dbReference type="Pfam" id="PF01134">
    <property type="entry name" value="GIDA"/>
    <property type="match status" value="1"/>
</dbReference>
<dbReference type="Pfam" id="PF21680">
    <property type="entry name" value="GIDA_C_1st"/>
    <property type="match status" value="1"/>
</dbReference>
<dbReference type="Pfam" id="PF13932">
    <property type="entry name" value="SAM_GIDA_C"/>
    <property type="match status" value="1"/>
</dbReference>
<dbReference type="PRINTS" id="PR00411">
    <property type="entry name" value="PNDRDTASEI"/>
</dbReference>
<dbReference type="SMART" id="SM01228">
    <property type="entry name" value="GIDA_assoc_3"/>
    <property type="match status" value="1"/>
</dbReference>
<dbReference type="SUPFAM" id="SSF51905">
    <property type="entry name" value="FAD/NAD(P)-binding domain"/>
    <property type="match status" value="1"/>
</dbReference>
<dbReference type="PROSITE" id="PS01280">
    <property type="entry name" value="GIDA_1"/>
    <property type="match status" value="1"/>
</dbReference>
<dbReference type="PROSITE" id="PS01281">
    <property type="entry name" value="GIDA_2"/>
    <property type="match status" value="1"/>
</dbReference>
<sequence length="622" mass="68790">MLKYDVIVIGGGHAGVEAAAASARLGVPTLLITLKPENLGEMSCNPAIGGIAKGTLVKEIDALDGLMGYVIDQAGIHYKMLNETRGPAVWGPRAQADRKLYKKAMYQILTNYPNLDILYGKVEDIEIKSSKIEAVILNNGSKILCQKIILTTGTFLSGLIHIGQKKIPAGRVDEEPSYGLSNTLKQIGFKLARLKTGTPPRIDGRTIDYSKTILQPGDKIPRPFSELTNIVNVSQINCFITKTTSETHDIIRENLDKSAMYSGQIEGIGPRYCPSIEDKIVRFSTKSEHRIFLEPEGLDDYTIYPNGISTSLPEDVQHKLIKTIPGLENVKVLRPGYAIEYDYVDPREISVTLETKKIAGLYLAGQINGTTGYEEAAGQGIIAGINAALAVKDQAPFMLTRANSYIGVMIDDLTTFGTIEPYRMFTSRSEYRLSLRADNSDLRLTELGMNIGVVSEKRKKIFTKKCEDIEKIKSLLNTLSLTTSKLAKMGIQVAQDGTYKTVLDLFKIPNFNVEQAIKIFPMLKETQNNNILQLLYIEAKYASYLTRQQADINLFQSEEAQFIPKNIDYFKIPSISLEIQEKLSAHKPTTIGVARRIPGITPAAITAIIIYLKTKYSDGSST</sequence>
<feature type="chain" id="PRO_1000016666" description="tRNA uridine 5-carboxymethylaminomethyl modification enzyme MnmG">
    <location>
        <begin position="1"/>
        <end position="622"/>
    </location>
</feature>
<feature type="binding site" evidence="1">
    <location>
        <begin position="10"/>
        <end position="15"/>
    </location>
    <ligand>
        <name>FAD</name>
        <dbReference type="ChEBI" id="CHEBI:57692"/>
    </ligand>
</feature>
<feature type="binding site" evidence="1">
    <location>
        <position position="122"/>
    </location>
    <ligand>
        <name>FAD</name>
        <dbReference type="ChEBI" id="CHEBI:57692"/>
    </ligand>
</feature>
<feature type="binding site" evidence="1">
    <location>
        <position position="177"/>
    </location>
    <ligand>
        <name>FAD</name>
        <dbReference type="ChEBI" id="CHEBI:57692"/>
    </ligand>
</feature>
<feature type="binding site" evidence="1">
    <location>
        <begin position="269"/>
        <end position="283"/>
    </location>
    <ligand>
        <name>NAD(+)</name>
        <dbReference type="ChEBI" id="CHEBI:57540"/>
    </ligand>
</feature>
<feature type="binding site" evidence="1">
    <location>
        <position position="366"/>
    </location>
    <ligand>
        <name>FAD</name>
        <dbReference type="ChEBI" id="CHEBI:57692"/>
    </ligand>
</feature>
<reference key="1">
    <citation type="submission" date="2007-09" db="EMBL/GenBank/DDBJ databases">
        <title>Complete genome sequence of Rickettsia rickettsii.</title>
        <authorList>
            <person name="Madan A."/>
            <person name="Fahey J."/>
            <person name="Helton E."/>
            <person name="Ketteman M."/>
            <person name="Madan A."/>
            <person name="Rodrigues S."/>
            <person name="Sanchez A."/>
            <person name="Dasch G."/>
            <person name="Eremeeva M."/>
        </authorList>
    </citation>
    <scope>NUCLEOTIDE SEQUENCE [LARGE SCALE GENOMIC DNA]</scope>
    <source>
        <strain>Sheila Smith</strain>
    </source>
</reference>
<comment type="function">
    <text evidence="1">NAD-binding protein involved in the addition of a carboxymethylaminomethyl (cmnm) group at the wobble position (U34) of certain tRNAs, forming tRNA-cmnm(5)s(2)U34.</text>
</comment>
<comment type="cofactor">
    <cofactor evidence="1">
        <name>FAD</name>
        <dbReference type="ChEBI" id="CHEBI:57692"/>
    </cofactor>
</comment>
<comment type="subunit">
    <text evidence="1">Homodimer. Heterotetramer of two MnmE and two MnmG subunits.</text>
</comment>
<comment type="subcellular location">
    <subcellularLocation>
        <location evidence="1">Cytoplasm</location>
    </subcellularLocation>
</comment>
<comment type="similarity">
    <text evidence="1">Belongs to the MnmG family.</text>
</comment>
<proteinExistence type="inferred from homology"/>
<name>MNMG_RICRS</name>
<gene>
    <name evidence="1" type="primary">mnmG</name>
    <name evidence="1" type="synonym">gidA</name>
    <name type="ordered locus">A1G_00530</name>
</gene>
<keyword id="KW-0963">Cytoplasm</keyword>
<keyword id="KW-0274">FAD</keyword>
<keyword id="KW-0285">Flavoprotein</keyword>
<keyword id="KW-0520">NAD</keyword>
<keyword id="KW-0819">tRNA processing</keyword>
<evidence type="ECO:0000255" key="1">
    <source>
        <dbReference type="HAMAP-Rule" id="MF_00129"/>
    </source>
</evidence>
<protein>
    <recommendedName>
        <fullName evidence="1">tRNA uridine 5-carboxymethylaminomethyl modification enzyme MnmG</fullName>
    </recommendedName>
    <alternativeName>
        <fullName evidence="1">Glucose-inhibited division protein A</fullName>
    </alternativeName>
</protein>